<name>TBX20_MOUSE</name>
<evidence type="ECO:0000255" key="1">
    <source>
        <dbReference type="PROSITE-ProRule" id="PRU00201"/>
    </source>
</evidence>
<evidence type="ECO:0000256" key="2">
    <source>
        <dbReference type="SAM" id="MobiDB-lite"/>
    </source>
</evidence>
<evidence type="ECO:0000269" key="3">
    <source>
    </source>
</evidence>
<evidence type="ECO:0000269" key="4">
    <source>
    </source>
</evidence>
<evidence type="ECO:0000269" key="5">
    <source>
    </source>
</evidence>
<evidence type="ECO:0000303" key="6">
    <source>
    </source>
</evidence>
<evidence type="ECO:0000303" key="7">
    <source>
    </source>
</evidence>
<evidence type="ECO:0000305" key="8"/>
<feature type="chain" id="PRO_0000184452" description="T-box transcription factor TBX20">
    <location>
        <begin position="1"/>
        <end position="445"/>
    </location>
</feature>
<feature type="DNA-binding region" description="T-box" evidence="1">
    <location>
        <begin position="108"/>
        <end position="287"/>
    </location>
</feature>
<feature type="region of interest" description="Disordered" evidence="2">
    <location>
        <begin position="318"/>
        <end position="337"/>
    </location>
</feature>
<feature type="compositionally biased region" description="Polar residues" evidence="2">
    <location>
        <begin position="325"/>
        <end position="337"/>
    </location>
</feature>
<feature type="splice variant" id="VSP_021730" description="In isoform 2." evidence="6 7">
    <location>
        <begin position="298"/>
        <end position="445"/>
    </location>
</feature>
<feature type="sequence conflict" description="In Ref. 1; AAG15491." evidence="8" ref="1">
    <original>D</original>
    <variation>N</variation>
    <location>
        <position position="62"/>
    </location>
</feature>
<feature type="sequence conflict" description="In Ref. 1; AAG15491." evidence="8" ref="1">
    <original>T</original>
    <variation>P</variation>
    <location>
        <position position="117"/>
    </location>
</feature>
<protein>
    <recommendedName>
        <fullName>T-box transcription factor TBX20</fullName>
        <shortName>T-box protein 20</shortName>
    </recommendedName>
</protein>
<organism>
    <name type="scientific">Mus musculus</name>
    <name type="common">Mouse</name>
    <dbReference type="NCBI Taxonomy" id="10090"/>
    <lineage>
        <taxon>Eukaryota</taxon>
        <taxon>Metazoa</taxon>
        <taxon>Chordata</taxon>
        <taxon>Craniata</taxon>
        <taxon>Vertebrata</taxon>
        <taxon>Euteleostomi</taxon>
        <taxon>Mammalia</taxon>
        <taxon>Eutheria</taxon>
        <taxon>Euarchontoglires</taxon>
        <taxon>Glires</taxon>
        <taxon>Rodentia</taxon>
        <taxon>Myomorpha</taxon>
        <taxon>Muroidea</taxon>
        <taxon>Muridae</taxon>
        <taxon>Murinae</taxon>
        <taxon>Mus</taxon>
        <taxon>Mus</taxon>
    </lineage>
</organism>
<gene>
    <name type="primary">Tbx20</name>
    <name type="synonym">Tbx12</name>
</gene>
<dbReference type="EMBL" id="AF260557">
    <property type="protein sequence ID" value="AAG15491.1"/>
    <property type="molecule type" value="mRNA"/>
</dbReference>
<dbReference type="EMBL" id="AJ277486">
    <property type="protein sequence ID" value="CAC04520.1"/>
    <property type="molecule type" value="mRNA"/>
</dbReference>
<dbReference type="EMBL" id="AF306667">
    <property type="protein sequence ID" value="AAG48599.1"/>
    <property type="molecule type" value="mRNA"/>
</dbReference>
<dbReference type="EMBL" id="AK141251">
    <property type="protein sequence ID" value="BAE24617.1"/>
    <property type="molecule type" value="mRNA"/>
</dbReference>
<dbReference type="CCDS" id="CCDS22933.1">
    <molecule id="Q9ES03-1"/>
</dbReference>
<dbReference type="CCDS" id="CCDS52744.1">
    <molecule id="Q9ES03-2"/>
</dbReference>
<dbReference type="RefSeq" id="NP_001192014.1">
    <property type="nucleotide sequence ID" value="NM_001205085.1"/>
</dbReference>
<dbReference type="RefSeq" id="NP_065242.1">
    <molecule id="Q9ES03-2"/>
    <property type="nucleotide sequence ID" value="NM_020496.4"/>
</dbReference>
<dbReference type="RefSeq" id="NP_919239.1">
    <molecule id="Q9ES03-1"/>
    <property type="nucleotide sequence ID" value="NM_194263.3"/>
</dbReference>
<dbReference type="SMR" id="Q9ES03"/>
<dbReference type="BioGRID" id="208216">
    <property type="interactions" value="1"/>
</dbReference>
<dbReference type="CORUM" id="Q9ES03"/>
<dbReference type="FunCoup" id="Q9ES03">
    <property type="interactions" value="2172"/>
</dbReference>
<dbReference type="IntAct" id="Q9ES03">
    <property type="interactions" value="2"/>
</dbReference>
<dbReference type="STRING" id="10090.ENSMUSP00000052591"/>
<dbReference type="GlyGen" id="Q9ES03">
    <property type="glycosylation" value="3 sites, 1 O-linked glycan (3 sites)"/>
</dbReference>
<dbReference type="iPTMnet" id="Q9ES03"/>
<dbReference type="PhosphoSitePlus" id="Q9ES03"/>
<dbReference type="PaxDb" id="10090-ENSMUSP00000052591"/>
<dbReference type="ProteomicsDB" id="254668">
    <molecule id="Q9ES03-1"/>
</dbReference>
<dbReference type="ProteomicsDB" id="254669">
    <molecule id="Q9ES03-2"/>
</dbReference>
<dbReference type="Antibodypedia" id="1814">
    <property type="antibodies" value="161 antibodies from 25 providers"/>
</dbReference>
<dbReference type="DNASU" id="57246"/>
<dbReference type="Ensembl" id="ENSMUST00000052946.12">
    <molecule id="Q9ES03-1"/>
    <property type="protein sequence ID" value="ENSMUSP00000052591.5"/>
    <property type="gene ID" value="ENSMUSG00000031965.16"/>
</dbReference>
<dbReference type="Ensembl" id="ENSMUST00000166018.4">
    <molecule id="Q9ES03-2"/>
    <property type="protein sequence ID" value="ENSMUSP00000126318.3"/>
    <property type="gene ID" value="ENSMUSG00000031965.16"/>
</dbReference>
<dbReference type="GeneID" id="57246"/>
<dbReference type="KEGG" id="mmu:57246"/>
<dbReference type="UCSC" id="uc009ope.2">
    <molecule id="Q9ES03-1"/>
    <property type="organism name" value="mouse"/>
</dbReference>
<dbReference type="AGR" id="MGI:1888496"/>
<dbReference type="CTD" id="57057"/>
<dbReference type="MGI" id="MGI:1888496">
    <property type="gene designation" value="Tbx20"/>
</dbReference>
<dbReference type="VEuPathDB" id="HostDB:ENSMUSG00000031965"/>
<dbReference type="eggNOG" id="KOG3586">
    <property type="taxonomic scope" value="Eukaryota"/>
</dbReference>
<dbReference type="GeneTree" id="ENSGT00940000158741"/>
<dbReference type="HOGENOM" id="CLU_014430_7_1_1"/>
<dbReference type="InParanoid" id="Q9ES03"/>
<dbReference type="OMA" id="EDGHTTH"/>
<dbReference type="OrthoDB" id="7442607at2759"/>
<dbReference type="PhylomeDB" id="Q9ES03"/>
<dbReference type="TreeFam" id="TF106341"/>
<dbReference type="BioGRID-ORCS" id="57246">
    <property type="hits" value="1 hit in 80 CRISPR screens"/>
</dbReference>
<dbReference type="ChiTaRS" id="Tbx20">
    <property type="organism name" value="mouse"/>
</dbReference>
<dbReference type="PRO" id="PR:Q9ES03"/>
<dbReference type="Proteomes" id="UP000000589">
    <property type="component" value="Chromosome 9"/>
</dbReference>
<dbReference type="RNAct" id="Q9ES03">
    <property type="molecule type" value="protein"/>
</dbReference>
<dbReference type="Bgee" id="ENSMUSG00000031965">
    <property type="expression patterns" value="Expressed in aortic valve and 124 other cell types or tissues"/>
</dbReference>
<dbReference type="ExpressionAtlas" id="Q9ES03">
    <property type="expression patterns" value="baseline and differential"/>
</dbReference>
<dbReference type="GO" id="GO:0005737">
    <property type="term" value="C:cytoplasm"/>
    <property type="evidence" value="ECO:0000314"/>
    <property type="project" value="BHF-UCL"/>
</dbReference>
<dbReference type="GO" id="GO:0005654">
    <property type="term" value="C:nucleoplasm"/>
    <property type="evidence" value="ECO:0000304"/>
    <property type="project" value="Reactome"/>
</dbReference>
<dbReference type="GO" id="GO:0005634">
    <property type="term" value="C:nucleus"/>
    <property type="evidence" value="ECO:0000314"/>
    <property type="project" value="BHF-UCL"/>
</dbReference>
<dbReference type="GO" id="GO:0003677">
    <property type="term" value="F:DNA binding"/>
    <property type="evidence" value="ECO:0000314"/>
    <property type="project" value="MGI"/>
</dbReference>
<dbReference type="GO" id="GO:0001228">
    <property type="term" value="F:DNA-binding transcription activator activity, RNA polymerase II-specific"/>
    <property type="evidence" value="ECO:0000314"/>
    <property type="project" value="NTNU_SB"/>
</dbReference>
<dbReference type="GO" id="GO:0003700">
    <property type="term" value="F:DNA-binding transcription factor activity"/>
    <property type="evidence" value="ECO:0000314"/>
    <property type="project" value="MGI"/>
</dbReference>
<dbReference type="GO" id="GO:0000981">
    <property type="term" value="F:DNA-binding transcription factor activity, RNA polymerase II-specific"/>
    <property type="evidence" value="ECO:0000314"/>
    <property type="project" value="BHF-UCL"/>
</dbReference>
<dbReference type="GO" id="GO:0000978">
    <property type="term" value="F:RNA polymerase II cis-regulatory region sequence-specific DNA binding"/>
    <property type="evidence" value="ECO:0000314"/>
    <property type="project" value="NTNU_SB"/>
</dbReference>
<dbReference type="GO" id="GO:0000977">
    <property type="term" value="F:RNA polymerase II transcription regulatory region sequence-specific DNA binding"/>
    <property type="evidence" value="ECO:0000314"/>
    <property type="project" value="BHF-UCL"/>
</dbReference>
<dbReference type="GO" id="GO:0061629">
    <property type="term" value="F:RNA polymerase II-specific DNA-binding transcription factor binding"/>
    <property type="evidence" value="ECO:0000353"/>
    <property type="project" value="BHF-UCL"/>
</dbReference>
<dbReference type="GO" id="GO:0003176">
    <property type="term" value="P:aortic valve development"/>
    <property type="evidence" value="ECO:0000315"/>
    <property type="project" value="BHF-UCL"/>
</dbReference>
<dbReference type="GO" id="GO:0003180">
    <property type="term" value="P:aortic valve morphogenesis"/>
    <property type="evidence" value="ECO:0007669"/>
    <property type="project" value="Ensembl"/>
</dbReference>
<dbReference type="GO" id="GO:0060413">
    <property type="term" value="P:atrial septum morphogenesis"/>
    <property type="evidence" value="ECO:0007669"/>
    <property type="project" value="Ensembl"/>
</dbReference>
<dbReference type="GO" id="GO:0036302">
    <property type="term" value="P:atrioventricular canal development"/>
    <property type="evidence" value="ECO:0000315"/>
    <property type="project" value="BHF-UCL"/>
</dbReference>
<dbReference type="GO" id="GO:0003171">
    <property type="term" value="P:atrioventricular valve development"/>
    <property type="evidence" value="ECO:0000315"/>
    <property type="project" value="BHF-UCL"/>
</dbReference>
<dbReference type="GO" id="GO:0008015">
    <property type="term" value="P:blood circulation"/>
    <property type="evidence" value="ECO:0000315"/>
    <property type="project" value="MGI"/>
</dbReference>
<dbReference type="GO" id="GO:0001569">
    <property type="term" value="P:branching involved in blood vessel morphogenesis"/>
    <property type="evidence" value="ECO:0000315"/>
    <property type="project" value="MGI"/>
</dbReference>
<dbReference type="GO" id="GO:0003207">
    <property type="term" value="P:cardiac chamber formation"/>
    <property type="evidence" value="ECO:0000315"/>
    <property type="project" value="BHF-UCL"/>
</dbReference>
<dbReference type="GO" id="GO:0055008">
    <property type="term" value="P:cardiac muscle tissue morphogenesis"/>
    <property type="evidence" value="ECO:0000315"/>
    <property type="project" value="BHF-UCL"/>
</dbReference>
<dbReference type="GO" id="GO:0003215">
    <property type="term" value="P:cardiac right ventricle morphogenesis"/>
    <property type="evidence" value="ECO:0000315"/>
    <property type="project" value="BHF-UCL"/>
</dbReference>
<dbReference type="GO" id="GO:0003279">
    <property type="term" value="P:cardiac septum development"/>
    <property type="evidence" value="ECO:0000315"/>
    <property type="project" value="BHF-UCL"/>
</dbReference>
<dbReference type="GO" id="GO:0008283">
    <property type="term" value="P:cell population proliferation"/>
    <property type="evidence" value="ECO:0000315"/>
    <property type="project" value="MGI"/>
</dbReference>
<dbReference type="GO" id="GO:0009953">
    <property type="term" value="P:dorsal/ventral pattern formation"/>
    <property type="evidence" value="ECO:0000315"/>
    <property type="project" value="MGI"/>
</dbReference>
<dbReference type="GO" id="GO:0035050">
    <property type="term" value="P:embryonic heart tube development"/>
    <property type="evidence" value="ECO:0000315"/>
    <property type="project" value="MGI"/>
</dbReference>
<dbReference type="GO" id="GO:0036306">
    <property type="term" value="P:embryonic heart tube elongation"/>
    <property type="evidence" value="ECO:0000315"/>
    <property type="project" value="BHF-UCL"/>
</dbReference>
<dbReference type="GO" id="GO:0003143">
    <property type="term" value="P:embryonic heart tube morphogenesis"/>
    <property type="evidence" value="ECO:0000315"/>
    <property type="project" value="BHF-UCL"/>
</dbReference>
<dbReference type="GO" id="GO:0003272">
    <property type="term" value="P:endocardial cushion formation"/>
    <property type="evidence" value="ECO:0000315"/>
    <property type="project" value="BHF-UCL"/>
</dbReference>
<dbReference type="GO" id="GO:0003203">
    <property type="term" value="P:endocardial cushion morphogenesis"/>
    <property type="evidence" value="ECO:0000315"/>
    <property type="project" value="BHF-UCL"/>
</dbReference>
<dbReference type="GO" id="GO:0035922">
    <property type="term" value="P:foramen ovale closure"/>
    <property type="evidence" value="ECO:0007669"/>
    <property type="project" value="Ensembl"/>
</dbReference>
<dbReference type="GO" id="GO:0001947">
    <property type="term" value="P:heart looping"/>
    <property type="evidence" value="ECO:0000315"/>
    <property type="project" value="BHF-UCL"/>
</dbReference>
<dbReference type="GO" id="GO:0014031">
    <property type="term" value="P:mesenchymal cell development"/>
    <property type="evidence" value="ECO:0000315"/>
    <property type="project" value="BHF-UCL"/>
</dbReference>
<dbReference type="GO" id="GO:0097475">
    <property type="term" value="P:motor neuron migration"/>
    <property type="evidence" value="ECO:0000315"/>
    <property type="project" value="MGI"/>
</dbReference>
<dbReference type="GO" id="GO:0006936">
    <property type="term" value="P:muscle contraction"/>
    <property type="evidence" value="ECO:0000315"/>
    <property type="project" value="MGI"/>
</dbReference>
<dbReference type="GO" id="GO:0045892">
    <property type="term" value="P:negative regulation of DNA-templated transcription"/>
    <property type="evidence" value="ECO:0000314"/>
    <property type="project" value="MGI"/>
</dbReference>
<dbReference type="GO" id="GO:0060392">
    <property type="term" value="P:negative regulation of SMAD protein signal transduction"/>
    <property type="evidence" value="ECO:0000314"/>
    <property type="project" value="MGI"/>
</dbReference>
<dbReference type="GO" id="GO:0000122">
    <property type="term" value="P:negative regulation of transcription by RNA polymerase II"/>
    <property type="evidence" value="ECO:0000315"/>
    <property type="project" value="BHF-UCL"/>
</dbReference>
<dbReference type="GO" id="GO:0003151">
    <property type="term" value="P:outflow tract morphogenesis"/>
    <property type="evidence" value="ECO:0000315"/>
    <property type="project" value="BHF-UCL"/>
</dbReference>
<dbReference type="GO" id="GO:0003148">
    <property type="term" value="P:outflow tract septum morphogenesis"/>
    <property type="evidence" value="ECO:0000315"/>
    <property type="project" value="BHF-UCL"/>
</dbReference>
<dbReference type="GO" id="GO:0003344">
    <property type="term" value="P:pericardium morphogenesis"/>
    <property type="evidence" value="ECO:0000315"/>
    <property type="project" value="BHF-UCL"/>
</dbReference>
<dbReference type="GO" id="GO:0043065">
    <property type="term" value="P:positive regulation of apoptotic process"/>
    <property type="evidence" value="ECO:0007669"/>
    <property type="project" value="Ensembl"/>
</dbReference>
<dbReference type="GO" id="GO:0030513">
    <property type="term" value="P:positive regulation of BMP signaling pathway"/>
    <property type="evidence" value="ECO:0000315"/>
    <property type="project" value="BHF-UCL"/>
</dbReference>
<dbReference type="GO" id="GO:0060045">
    <property type="term" value="P:positive regulation of cardiac muscle cell proliferation"/>
    <property type="evidence" value="ECO:0000315"/>
    <property type="project" value="BHF-UCL"/>
</dbReference>
<dbReference type="GO" id="GO:0090068">
    <property type="term" value="P:positive regulation of cell cycle process"/>
    <property type="evidence" value="ECO:0007669"/>
    <property type="project" value="Ensembl"/>
</dbReference>
<dbReference type="GO" id="GO:0045893">
    <property type="term" value="P:positive regulation of DNA-templated transcription"/>
    <property type="evidence" value="ECO:0000314"/>
    <property type="project" value="MGI"/>
</dbReference>
<dbReference type="GO" id="GO:0010718">
    <property type="term" value="P:positive regulation of epithelial to mesenchymal transition"/>
    <property type="evidence" value="ECO:0000315"/>
    <property type="project" value="BHF-UCL"/>
</dbReference>
<dbReference type="GO" id="GO:0045944">
    <property type="term" value="P:positive regulation of transcription by RNA polymerase II"/>
    <property type="evidence" value="ECO:0000314"/>
    <property type="project" value="NTNU_SB"/>
</dbReference>
<dbReference type="GO" id="GO:0003193">
    <property type="term" value="P:pulmonary valve formation"/>
    <property type="evidence" value="ECO:0000315"/>
    <property type="project" value="BHF-UCL"/>
</dbReference>
<dbReference type="GO" id="GO:0060577">
    <property type="term" value="P:pulmonary vein morphogenesis"/>
    <property type="evidence" value="ECO:0007669"/>
    <property type="project" value="Ensembl"/>
</dbReference>
<dbReference type="GO" id="GO:0010717">
    <property type="term" value="P:regulation of epithelial to mesenchymal transition"/>
    <property type="evidence" value="ECO:0000303"/>
    <property type="project" value="BHF-UCL"/>
</dbReference>
<dbReference type="GO" id="GO:0003175">
    <property type="term" value="P:tricuspid valve development"/>
    <property type="evidence" value="ECO:0000315"/>
    <property type="project" value="BHF-UCL"/>
</dbReference>
<dbReference type="GO" id="GO:0021524">
    <property type="term" value="P:visceral motor neuron differentiation"/>
    <property type="evidence" value="ECO:0000315"/>
    <property type="project" value="BHF-UCL"/>
</dbReference>
<dbReference type="CDD" id="cd20193">
    <property type="entry name" value="T-box_TBX20-like"/>
    <property type="match status" value="1"/>
</dbReference>
<dbReference type="FunFam" id="2.60.40.820:FF:000008">
    <property type="entry name" value="T-box transcription factor TBX20"/>
    <property type="match status" value="1"/>
</dbReference>
<dbReference type="Gene3D" id="2.60.40.820">
    <property type="entry name" value="Transcription factor, T-box"/>
    <property type="match status" value="1"/>
</dbReference>
<dbReference type="InterPro" id="IPR008967">
    <property type="entry name" value="p53-like_TF_DNA-bd_sf"/>
</dbReference>
<dbReference type="InterPro" id="IPR046360">
    <property type="entry name" value="T-box_DNA-bd"/>
</dbReference>
<dbReference type="InterPro" id="IPR036960">
    <property type="entry name" value="T-box_sf"/>
</dbReference>
<dbReference type="InterPro" id="IPR001699">
    <property type="entry name" value="TF_T-box"/>
</dbReference>
<dbReference type="InterPro" id="IPR018186">
    <property type="entry name" value="TF_T-box_CS"/>
</dbReference>
<dbReference type="PANTHER" id="PTHR11267">
    <property type="entry name" value="T-BOX PROTEIN-RELATED"/>
    <property type="match status" value="1"/>
</dbReference>
<dbReference type="PANTHER" id="PTHR11267:SF190">
    <property type="entry name" value="T-BOX TRANSCRIPTION FACTOR TBX20"/>
    <property type="match status" value="1"/>
</dbReference>
<dbReference type="Pfam" id="PF00907">
    <property type="entry name" value="T-box"/>
    <property type="match status" value="1"/>
</dbReference>
<dbReference type="PRINTS" id="PR00937">
    <property type="entry name" value="TBOX"/>
</dbReference>
<dbReference type="SMART" id="SM00425">
    <property type="entry name" value="TBOX"/>
    <property type="match status" value="1"/>
</dbReference>
<dbReference type="SUPFAM" id="SSF49417">
    <property type="entry name" value="p53-like transcription factors"/>
    <property type="match status" value="1"/>
</dbReference>
<dbReference type="PROSITE" id="PS01283">
    <property type="entry name" value="TBOX_1"/>
    <property type="match status" value="1"/>
</dbReference>
<dbReference type="PROSITE" id="PS01264">
    <property type="entry name" value="TBOX_2"/>
    <property type="match status" value="1"/>
</dbReference>
<dbReference type="PROSITE" id="PS50252">
    <property type="entry name" value="TBOX_3"/>
    <property type="match status" value="1"/>
</dbReference>
<keyword id="KW-0025">Alternative splicing</keyword>
<keyword id="KW-0217">Developmental protein</keyword>
<keyword id="KW-0238">DNA-binding</keyword>
<keyword id="KW-0539">Nucleus</keyword>
<keyword id="KW-1185">Reference proteome</keyword>
<keyword id="KW-0804">Transcription</keyword>
<keyword id="KW-0805">Transcription regulation</keyword>
<sequence>MEFTASPKPQLSSRANAFSIAALMSSGGPKEKEAAENTIKPLEQFVEKSSCAQPLGELTSLDAHAEFGGGGGSPSSSSLCTEPLIPTTPIIPSEEMAKIACSLETKELWDKFHELGTEMIITKSGRRMFPTIRVSFSGVDPESKYIVLMDIVPVDNKRYRYAYHRSSWLVAGKADPPLPARLYVHPDSPFTGEQLLKQMVSFEKVKLTNNELDQHGHIILNSMHKYQPRVHIIKKKDHTASLLNLKSEEFRTFIFPETVFTAVTAYQNQLITKLKIDSNPFAKGFRDSSRLTDIERESVESLIQKHSYARSPIRTYGEEDVLGEESQTTQSRGSAFTTSDNLSLSSWVSSSSSFPGFQHPQPLTALGTSTASIATPIPHPIQGSLPPYSRLGMPLTPSAIASSMQGSGPTFPSFHMPRYHHYFQQGPYAAIQGLRHSSAVMTPFV</sequence>
<reference key="1">
    <citation type="journal article" date="2000" name="Mech. Dev.">
        <title>Tbx12, a novel T-box gene, is expressed during early stages of heart and retinal development.</title>
        <authorList>
            <person name="Carson C.T."/>
            <person name="Kinzler E.R."/>
            <person name="Parr B.A."/>
        </authorList>
    </citation>
    <scope>NUCLEOTIDE SEQUENCE [MRNA] (ISOFORM 2)</scope>
</reference>
<reference key="2">
    <citation type="journal article" date="2000" name="Genomics">
        <title>Characterization of the human TBX20 gene, a new member of the T-box gene family closely related to the Drosophila H15 gene.</title>
        <authorList>
            <person name="Meins M."/>
            <person name="Henderson D.J."/>
            <person name="Bhattacharya S.S."/>
            <person name="Sowden J.C."/>
        </authorList>
    </citation>
    <scope>NUCLEOTIDE SEQUENCE [MRNA] (ISOFORM 2)</scope>
    <source>
        <tissue>Fetal heart</tissue>
    </source>
</reference>
<reference key="3">
    <citation type="journal article" date="2001" name="Mech. Dev.">
        <title>Cloning and expression analysis of the mouse T-box gene tbx20.</title>
        <authorList>
            <person name="Kraus F."/>
            <person name="Haenig B."/>
            <person name="Kispert A."/>
        </authorList>
    </citation>
    <scope>NUCLEOTIDE SEQUENCE [MRNA] (ISOFORM 1)</scope>
    <scope>TISSUE SPECIFICITY</scope>
    <scope>DEVELOPMENTAL STAGE</scope>
    <source>
        <strain>NIH Swiss</strain>
        <tissue>Embryonic heart</tissue>
    </source>
</reference>
<reference key="4">
    <citation type="journal article" date="2005" name="Science">
        <title>The transcriptional landscape of the mammalian genome.</title>
        <authorList>
            <person name="Carninci P."/>
            <person name="Kasukawa T."/>
            <person name="Katayama S."/>
            <person name="Gough J."/>
            <person name="Frith M.C."/>
            <person name="Maeda N."/>
            <person name="Oyama R."/>
            <person name="Ravasi T."/>
            <person name="Lenhard B."/>
            <person name="Wells C."/>
            <person name="Kodzius R."/>
            <person name="Shimokawa K."/>
            <person name="Bajic V.B."/>
            <person name="Brenner S.E."/>
            <person name="Batalov S."/>
            <person name="Forrest A.R."/>
            <person name="Zavolan M."/>
            <person name="Davis M.J."/>
            <person name="Wilming L.G."/>
            <person name="Aidinis V."/>
            <person name="Allen J.E."/>
            <person name="Ambesi-Impiombato A."/>
            <person name="Apweiler R."/>
            <person name="Aturaliya R.N."/>
            <person name="Bailey T.L."/>
            <person name="Bansal M."/>
            <person name="Baxter L."/>
            <person name="Beisel K.W."/>
            <person name="Bersano T."/>
            <person name="Bono H."/>
            <person name="Chalk A.M."/>
            <person name="Chiu K.P."/>
            <person name="Choudhary V."/>
            <person name="Christoffels A."/>
            <person name="Clutterbuck D.R."/>
            <person name="Crowe M.L."/>
            <person name="Dalla E."/>
            <person name="Dalrymple B.P."/>
            <person name="de Bono B."/>
            <person name="Della Gatta G."/>
            <person name="di Bernardo D."/>
            <person name="Down T."/>
            <person name="Engstrom P."/>
            <person name="Fagiolini M."/>
            <person name="Faulkner G."/>
            <person name="Fletcher C.F."/>
            <person name="Fukushima T."/>
            <person name="Furuno M."/>
            <person name="Futaki S."/>
            <person name="Gariboldi M."/>
            <person name="Georgii-Hemming P."/>
            <person name="Gingeras T.R."/>
            <person name="Gojobori T."/>
            <person name="Green R.E."/>
            <person name="Gustincich S."/>
            <person name="Harbers M."/>
            <person name="Hayashi Y."/>
            <person name="Hensch T.K."/>
            <person name="Hirokawa N."/>
            <person name="Hill D."/>
            <person name="Huminiecki L."/>
            <person name="Iacono M."/>
            <person name="Ikeo K."/>
            <person name="Iwama A."/>
            <person name="Ishikawa T."/>
            <person name="Jakt M."/>
            <person name="Kanapin A."/>
            <person name="Katoh M."/>
            <person name="Kawasawa Y."/>
            <person name="Kelso J."/>
            <person name="Kitamura H."/>
            <person name="Kitano H."/>
            <person name="Kollias G."/>
            <person name="Krishnan S.P."/>
            <person name="Kruger A."/>
            <person name="Kummerfeld S.K."/>
            <person name="Kurochkin I.V."/>
            <person name="Lareau L.F."/>
            <person name="Lazarevic D."/>
            <person name="Lipovich L."/>
            <person name="Liu J."/>
            <person name="Liuni S."/>
            <person name="McWilliam S."/>
            <person name="Madan Babu M."/>
            <person name="Madera M."/>
            <person name="Marchionni L."/>
            <person name="Matsuda H."/>
            <person name="Matsuzawa S."/>
            <person name="Miki H."/>
            <person name="Mignone F."/>
            <person name="Miyake S."/>
            <person name="Morris K."/>
            <person name="Mottagui-Tabar S."/>
            <person name="Mulder N."/>
            <person name="Nakano N."/>
            <person name="Nakauchi H."/>
            <person name="Ng P."/>
            <person name="Nilsson R."/>
            <person name="Nishiguchi S."/>
            <person name="Nishikawa S."/>
            <person name="Nori F."/>
            <person name="Ohara O."/>
            <person name="Okazaki Y."/>
            <person name="Orlando V."/>
            <person name="Pang K.C."/>
            <person name="Pavan W.J."/>
            <person name="Pavesi G."/>
            <person name="Pesole G."/>
            <person name="Petrovsky N."/>
            <person name="Piazza S."/>
            <person name="Reed J."/>
            <person name="Reid J.F."/>
            <person name="Ring B.Z."/>
            <person name="Ringwald M."/>
            <person name="Rost B."/>
            <person name="Ruan Y."/>
            <person name="Salzberg S.L."/>
            <person name="Sandelin A."/>
            <person name="Schneider C."/>
            <person name="Schoenbach C."/>
            <person name="Sekiguchi K."/>
            <person name="Semple C.A."/>
            <person name="Seno S."/>
            <person name="Sessa L."/>
            <person name="Sheng Y."/>
            <person name="Shibata Y."/>
            <person name="Shimada H."/>
            <person name="Shimada K."/>
            <person name="Silva D."/>
            <person name="Sinclair B."/>
            <person name="Sperling S."/>
            <person name="Stupka E."/>
            <person name="Sugiura K."/>
            <person name="Sultana R."/>
            <person name="Takenaka Y."/>
            <person name="Taki K."/>
            <person name="Tammoja K."/>
            <person name="Tan S.L."/>
            <person name="Tang S."/>
            <person name="Taylor M.S."/>
            <person name="Tegner J."/>
            <person name="Teichmann S.A."/>
            <person name="Ueda H.R."/>
            <person name="van Nimwegen E."/>
            <person name="Verardo R."/>
            <person name="Wei C.L."/>
            <person name="Yagi K."/>
            <person name="Yamanishi H."/>
            <person name="Zabarovsky E."/>
            <person name="Zhu S."/>
            <person name="Zimmer A."/>
            <person name="Hide W."/>
            <person name="Bult C."/>
            <person name="Grimmond S.M."/>
            <person name="Teasdale R.D."/>
            <person name="Liu E.T."/>
            <person name="Brusic V."/>
            <person name="Quackenbush J."/>
            <person name="Wahlestedt C."/>
            <person name="Mattick J.S."/>
            <person name="Hume D.A."/>
            <person name="Kai C."/>
            <person name="Sasaki D."/>
            <person name="Tomaru Y."/>
            <person name="Fukuda S."/>
            <person name="Kanamori-Katayama M."/>
            <person name="Suzuki M."/>
            <person name="Aoki J."/>
            <person name="Arakawa T."/>
            <person name="Iida J."/>
            <person name="Imamura K."/>
            <person name="Itoh M."/>
            <person name="Kato T."/>
            <person name="Kawaji H."/>
            <person name="Kawagashira N."/>
            <person name="Kawashima T."/>
            <person name="Kojima M."/>
            <person name="Kondo S."/>
            <person name="Konno H."/>
            <person name="Nakano K."/>
            <person name="Ninomiya N."/>
            <person name="Nishio T."/>
            <person name="Okada M."/>
            <person name="Plessy C."/>
            <person name="Shibata K."/>
            <person name="Shiraki T."/>
            <person name="Suzuki S."/>
            <person name="Tagami M."/>
            <person name="Waki K."/>
            <person name="Watahiki A."/>
            <person name="Okamura-Oho Y."/>
            <person name="Suzuki H."/>
            <person name="Kawai J."/>
            <person name="Hayashizaki Y."/>
        </authorList>
    </citation>
    <scope>NUCLEOTIDE SEQUENCE [LARGE SCALE MRNA] (ISOFORM 1)</scope>
    <source>
        <strain>C57BL/6J</strain>
    </source>
</reference>
<reference key="5">
    <citation type="journal article" date="2005" name="Development">
        <title>Tbx20 is essential for cardiac chamber differentiation and repression of Tbx2.</title>
        <authorList>
            <person name="Singh M.K."/>
            <person name="Christoffels V.M."/>
            <person name="Dias J.M."/>
            <person name="Trowe M.O."/>
            <person name="Petry M."/>
            <person name="Schuster-Gossler K."/>
            <person name="Burger A."/>
            <person name="Ericson J."/>
            <person name="Kispert A."/>
        </authorList>
    </citation>
    <scope>DISRUPTION PHENOTYPE</scope>
</reference>
<reference key="6">
    <citation type="journal article" date="2012" name="Hum. Mol. Genet.">
        <title>Dual transcriptional activator and repressor roles of TBX20 regulate adult cardiac structure and function.</title>
        <authorList>
            <person name="Sakabe N.J."/>
            <person name="Aneas I."/>
            <person name="Shen T."/>
            <person name="Shokri L."/>
            <person name="Park S.Y."/>
            <person name="Bulyk M.L."/>
            <person name="Evans S.M."/>
            <person name="Nobrega M.A."/>
        </authorList>
    </citation>
    <scope>FUNCTION</scope>
</reference>
<comment type="function">
    <text evidence="5">Acts as a transcriptional activator and repressor required for cardiac development and may have key roles in the maintenance of functional and structural phenotypes in adult heart.</text>
</comment>
<comment type="subcellular location">
    <subcellularLocation>
        <location evidence="1">Nucleus</location>
    </subcellularLocation>
</comment>
<comment type="alternative products">
    <event type="alternative splicing"/>
    <isoform>
        <id>Q9ES03-1</id>
        <name>1</name>
        <sequence type="displayed"/>
    </isoform>
    <isoform>
        <id>Q9ES03-2</id>
        <name>2</name>
        <sequence type="described" ref="VSP_021730"/>
    </isoform>
</comment>
<comment type="tissue specificity">
    <text evidence="3">Prominently expressed in the extraembryonic mesoderm, developing heart, eye analage and motor neurons of hindbrain and spinal cord. Expressed in extraembryonic tissues such as the amnion and allantois.</text>
</comment>
<comment type="developmental stage">
    <text evidence="3">Between 7.25 dpc and 8 dpc, expression detected in the extraembryonic mesoderm and contributes to amnion and chorion. Allantois expression persists until 10.5 dpc and continues into the umbilical cord. Expression is found throughout heart development. At 7.5 dpc, detected in the cardiogenic mesoderm, at 8.0 dpc-8.5, found in the cardiac crescent and looping heart tube and from 9.5 dpc, found in the forming four-chambered heart. At all stages, expression is much stronger in the myocardium than in the endocardium and expression extends from the cardiogenic into the lateral plate mesoderm. From 10.5 dpc on, weakly expressed in the periphery of the liver lobes, and in cells surrounding the aorta in the urogenital system. At 9.0 dpc, weakly expressed in the dorsal half of the optic vesicle. Later, expression spreads ventrally to enclose the entire neural retina at 11.5 dpc. At 9.0 dpc, expression is initiated in the hindbrain: first in the ventral region of rhombomere (r) 2 and 4, then in r7, r8 and in the cervical spinal cord. By 10.5 dpc, two ventral stripes of Tbx20 containing cells are continuous from r2 into the cervical spinal cord and expression is seen in two symmetrical patches of cell bodies in the mantle region of the ventral neural tube. At 11.5 dpc, expression follows the migration of motor neurons.</text>
</comment>
<comment type="disruption phenotype">
    <text evidence="4">Embryos die at mid-gestation. The heart tube of deficient mice does not elongate, but anterior and secondary heart field markers are not affected.</text>
</comment>
<proteinExistence type="evidence at transcript level"/>
<accession>Q9ES03</accession>
<accession>Q9EPZ5</accession>
<accession>Q9ESX1</accession>